<proteinExistence type="inferred from homology"/>
<gene>
    <name type="primary">uspF</name>
    <name type="ordered locus">STY1416</name>
    <name type="ordered locus">t1555</name>
</gene>
<evidence type="ECO:0000250" key="1"/>
<evidence type="ECO:0000305" key="2"/>
<name>USPF_SALTI</name>
<accession>P67092</accession>
<accession>Q8XGH6</accession>
<dbReference type="EMBL" id="AL513382">
    <property type="protein sequence ID" value="CAD01679.1"/>
    <property type="molecule type" value="Genomic_DNA"/>
</dbReference>
<dbReference type="EMBL" id="AE014613">
    <property type="protein sequence ID" value="AAO69187.1"/>
    <property type="molecule type" value="Genomic_DNA"/>
</dbReference>
<dbReference type="RefSeq" id="NP_455852.1">
    <property type="nucleotide sequence ID" value="NC_003198.1"/>
</dbReference>
<dbReference type="RefSeq" id="WP_001082296.1">
    <property type="nucleotide sequence ID" value="NZ_WSUR01000041.1"/>
</dbReference>
<dbReference type="SMR" id="P67092"/>
<dbReference type="STRING" id="220341.gene:17585369"/>
<dbReference type="KEGG" id="stt:t1555"/>
<dbReference type="KEGG" id="sty:STY1416"/>
<dbReference type="PATRIC" id="fig|220341.7.peg.1425"/>
<dbReference type="eggNOG" id="COG0589">
    <property type="taxonomic scope" value="Bacteria"/>
</dbReference>
<dbReference type="HOGENOM" id="CLU_049301_12_0_6"/>
<dbReference type="OMA" id="TSHRPAM"/>
<dbReference type="OrthoDB" id="9792500at2"/>
<dbReference type="Proteomes" id="UP000000541">
    <property type="component" value="Chromosome"/>
</dbReference>
<dbReference type="Proteomes" id="UP000002670">
    <property type="component" value="Chromosome"/>
</dbReference>
<dbReference type="CDD" id="cd00293">
    <property type="entry name" value="USP-like"/>
    <property type="match status" value="1"/>
</dbReference>
<dbReference type="FunFam" id="3.40.50.620:FF:000059">
    <property type="entry name" value="Universal stress protein F"/>
    <property type="match status" value="1"/>
</dbReference>
<dbReference type="Gene3D" id="3.40.50.620">
    <property type="entry name" value="HUPs"/>
    <property type="match status" value="1"/>
</dbReference>
<dbReference type="InterPro" id="IPR014729">
    <property type="entry name" value="Rossmann-like_a/b/a_fold"/>
</dbReference>
<dbReference type="InterPro" id="IPR006015">
    <property type="entry name" value="Universal_stress_UspA"/>
</dbReference>
<dbReference type="InterPro" id="IPR006016">
    <property type="entry name" value="UspA"/>
</dbReference>
<dbReference type="NCBIfam" id="NF011581">
    <property type="entry name" value="PRK15005.1"/>
    <property type="match status" value="1"/>
</dbReference>
<dbReference type="PANTHER" id="PTHR46268">
    <property type="entry name" value="STRESS RESPONSE PROTEIN NHAX"/>
    <property type="match status" value="1"/>
</dbReference>
<dbReference type="PANTHER" id="PTHR46268:SF18">
    <property type="entry name" value="UNIVERSAL STRESS PROTEIN F"/>
    <property type="match status" value="1"/>
</dbReference>
<dbReference type="Pfam" id="PF00582">
    <property type="entry name" value="Usp"/>
    <property type="match status" value="1"/>
</dbReference>
<dbReference type="PRINTS" id="PR01438">
    <property type="entry name" value="UNVRSLSTRESS"/>
</dbReference>
<dbReference type="SUPFAM" id="SSF52402">
    <property type="entry name" value="Adenine nucleotide alpha hydrolases-like"/>
    <property type="match status" value="1"/>
</dbReference>
<comment type="subunit">
    <text evidence="1">Homodimer.</text>
</comment>
<comment type="similarity">
    <text evidence="2">Belongs to the universal stress protein A family.</text>
</comment>
<sequence>MNRTILVPIDISDSELTQRVISHVEAEAKIDDAKVHFLTVIPSLPYYASLGLAYSAELPAMDDLKAEAKSQLEAIIKKFNLPADRVQAHVAEGSPKDKILEMAKKLPADMVIIASHRPDITTYLLGSNAAAVVRHAECSVLVVR</sequence>
<protein>
    <recommendedName>
        <fullName>Universal stress protein F</fullName>
    </recommendedName>
</protein>
<reference key="1">
    <citation type="journal article" date="2001" name="Nature">
        <title>Complete genome sequence of a multiple drug resistant Salmonella enterica serovar Typhi CT18.</title>
        <authorList>
            <person name="Parkhill J."/>
            <person name="Dougan G."/>
            <person name="James K.D."/>
            <person name="Thomson N.R."/>
            <person name="Pickard D."/>
            <person name="Wain J."/>
            <person name="Churcher C.M."/>
            <person name="Mungall K.L."/>
            <person name="Bentley S.D."/>
            <person name="Holden M.T.G."/>
            <person name="Sebaihia M."/>
            <person name="Baker S."/>
            <person name="Basham D."/>
            <person name="Brooks K."/>
            <person name="Chillingworth T."/>
            <person name="Connerton P."/>
            <person name="Cronin A."/>
            <person name="Davis P."/>
            <person name="Davies R.M."/>
            <person name="Dowd L."/>
            <person name="White N."/>
            <person name="Farrar J."/>
            <person name="Feltwell T."/>
            <person name="Hamlin N."/>
            <person name="Haque A."/>
            <person name="Hien T.T."/>
            <person name="Holroyd S."/>
            <person name="Jagels K."/>
            <person name="Krogh A."/>
            <person name="Larsen T.S."/>
            <person name="Leather S."/>
            <person name="Moule S."/>
            <person name="O'Gaora P."/>
            <person name="Parry C."/>
            <person name="Quail M.A."/>
            <person name="Rutherford K.M."/>
            <person name="Simmonds M."/>
            <person name="Skelton J."/>
            <person name="Stevens K."/>
            <person name="Whitehead S."/>
            <person name="Barrell B.G."/>
        </authorList>
    </citation>
    <scope>NUCLEOTIDE SEQUENCE [LARGE SCALE GENOMIC DNA]</scope>
    <source>
        <strain>CT18</strain>
    </source>
</reference>
<reference key="2">
    <citation type="journal article" date="2003" name="J. Bacteriol.">
        <title>Comparative genomics of Salmonella enterica serovar Typhi strains Ty2 and CT18.</title>
        <authorList>
            <person name="Deng W."/>
            <person name="Liou S.-R."/>
            <person name="Plunkett G. III"/>
            <person name="Mayhew G.F."/>
            <person name="Rose D.J."/>
            <person name="Burland V."/>
            <person name="Kodoyianni V."/>
            <person name="Schwartz D.C."/>
            <person name="Blattner F.R."/>
        </authorList>
    </citation>
    <scope>NUCLEOTIDE SEQUENCE [LARGE SCALE GENOMIC DNA]</scope>
    <source>
        <strain>ATCC 700931 / Ty2</strain>
    </source>
</reference>
<feature type="chain" id="PRO_0000147429" description="Universal stress protein F">
    <location>
        <begin position="1"/>
        <end position="144"/>
    </location>
</feature>
<organism>
    <name type="scientific">Salmonella typhi</name>
    <dbReference type="NCBI Taxonomy" id="90370"/>
    <lineage>
        <taxon>Bacteria</taxon>
        <taxon>Pseudomonadati</taxon>
        <taxon>Pseudomonadota</taxon>
        <taxon>Gammaproteobacteria</taxon>
        <taxon>Enterobacterales</taxon>
        <taxon>Enterobacteriaceae</taxon>
        <taxon>Salmonella</taxon>
    </lineage>
</organism>